<evidence type="ECO:0000255" key="1">
    <source>
        <dbReference type="HAMAP-Rule" id="MF_00817"/>
    </source>
</evidence>
<keyword id="KW-0963">Cytoplasm</keyword>
<keyword id="KW-0521">NADP</keyword>
<keyword id="KW-0560">Oxidoreductase</keyword>
<keyword id="KW-0671">Queuosine biosynthesis</keyword>
<keyword id="KW-1185">Reference proteome</keyword>
<name>QUEF_HAEIN</name>
<protein>
    <recommendedName>
        <fullName evidence="1">NADPH-dependent 7-cyano-7-deazaguanine reductase</fullName>
        <ecNumber evidence="1">1.7.1.13</ecNumber>
    </recommendedName>
    <alternativeName>
        <fullName evidence="1">7-cyano-7-carbaguanine reductase</fullName>
    </alternativeName>
    <alternativeName>
        <fullName evidence="1">NADPH-dependent nitrile oxidoreductase</fullName>
    </alternativeName>
    <alternativeName>
        <fullName evidence="1">PreQ(0) reductase</fullName>
    </alternativeName>
</protein>
<organism>
    <name type="scientific">Haemophilus influenzae (strain ATCC 51907 / DSM 11121 / KW20 / Rd)</name>
    <dbReference type="NCBI Taxonomy" id="71421"/>
    <lineage>
        <taxon>Bacteria</taxon>
        <taxon>Pseudomonadati</taxon>
        <taxon>Pseudomonadota</taxon>
        <taxon>Gammaproteobacteria</taxon>
        <taxon>Pasteurellales</taxon>
        <taxon>Pasteurellaceae</taxon>
        <taxon>Haemophilus</taxon>
    </lineage>
</organism>
<dbReference type="EC" id="1.7.1.13" evidence="1"/>
<dbReference type="EMBL" id="L42023">
    <property type="protein sequence ID" value="AAC22940.1"/>
    <property type="molecule type" value="Genomic_DNA"/>
</dbReference>
<dbReference type="PIR" id="I64024">
    <property type="entry name" value="I64024"/>
</dbReference>
<dbReference type="RefSeq" id="NP_439443.1">
    <property type="nucleotide sequence ID" value="NC_000907.1"/>
</dbReference>
<dbReference type="SMR" id="P44153"/>
<dbReference type="STRING" id="71421.HI_1291"/>
<dbReference type="EnsemblBacteria" id="AAC22940">
    <property type="protein sequence ID" value="AAC22940"/>
    <property type="gene ID" value="HI_1291"/>
</dbReference>
<dbReference type="KEGG" id="hin:HI_1291"/>
<dbReference type="PATRIC" id="fig|71421.8.peg.1343"/>
<dbReference type="eggNOG" id="COG0780">
    <property type="taxonomic scope" value="Bacteria"/>
</dbReference>
<dbReference type="eggNOG" id="COG2904">
    <property type="taxonomic scope" value="Bacteria"/>
</dbReference>
<dbReference type="HOGENOM" id="CLU_054738_0_0_6"/>
<dbReference type="OrthoDB" id="9789995at2"/>
<dbReference type="PhylomeDB" id="P44153"/>
<dbReference type="BioCyc" id="HINF71421:G1GJ1-1317-MONOMER"/>
<dbReference type="UniPathway" id="UPA00392"/>
<dbReference type="Proteomes" id="UP000000579">
    <property type="component" value="Chromosome"/>
</dbReference>
<dbReference type="GO" id="GO:0005829">
    <property type="term" value="C:cytosol"/>
    <property type="evidence" value="ECO:0000318"/>
    <property type="project" value="GO_Central"/>
</dbReference>
<dbReference type="GO" id="GO:0033739">
    <property type="term" value="F:preQ1 synthase activity"/>
    <property type="evidence" value="ECO:0000318"/>
    <property type="project" value="GO_Central"/>
</dbReference>
<dbReference type="GO" id="GO:0008616">
    <property type="term" value="P:queuosine biosynthetic process"/>
    <property type="evidence" value="ECO:0000318"/>
    <property type="project" value="GO_Central"/>
</dbReference>
<dbReference type="GO" id="GO:0006400">
    <property type="term" value="P:tRNA modification"/>
    <property type="evidence" value="ECO:0007669"/>
    <property type="project" value="UniProtKB-UniRule"/>
</dbReference>
<dbReference type="Gene3D" id="3.30.1130.10">
    <property type="match status" value="2"/>
</dbReference>
<dbReference type="HAMAP" id="MF_00817">
    <property type="entry name" value="QueF_type2"/>
    <property type="match status" value="1"/>
</dbReference>
<dbReference type="InterPro" id="IPR043133">
    <property type="entry name" value="GTP-CH-I_C/QueF"/>
</dbReference>
<dbReference type="InterPro" id="IPR050084">
    <property type="entry name" value="NADPH_dep_7-cyano-7-deazaG_red"/>
</dbReference>
<dbReference type="InterPro" id="IPR029500">
    <property type="entry name" value="QueF"/>
</dbReference>
<dbReference type="InterPro" id="IPR029139">
    <property type="entry name" value="QueF_N"/>
</dbReference>
<dbReference type="InterPro" id="IPR016428">
    <property type="entry name" value="QueF_type2"/>
</dbReference>
<dbReference type="NCBIfam" id="TIGR03138">
    <property type="entry name" value="QueF"/>
    <property type="match status" value="1"/>
</dbReference>
<dbReference type="PANTHER" id="PTHR34354">
    <property type="entry name" value="NADPH-DEPENDENT 7-CYANO-7-DEAZAGUANINE REDUCTASE"/>
    <property type="match status" value="1"/>
</dbReference>
<dbReference type="PANTHER" id="PTHR34354:SF1">
    <property type="entry name" value="NADPH-DEPENDENT 7-CYANO-7-DEAZAGUANINE REDUCTASE"/>
    <property type="match status" value="1"/>
</dbReference>
<dbReference type="Pfam" id="PF14489">
    <property type="entry name" value="QueF"/>
    <property type="match status" value="1"/>
</dbReference>
<dbReference type="Pfam" id="PF14819">
    <property type="entry name" value="QueF_N"/>
    <property type="match status" value="1"/>
</dbReference>
<dbReference type="PIRSF" id="PIRSF004750">
    <property type="entry name" value="Nitrile_oxidored_YqcD_prd"/>
    <property type="match status" value="1"/>
</dbReference>
<dbReference type="SUPFAM" id="SSF55620">
    <property type="entry name" value="Tetrahydrobiopterin biosynthesis enzymes-like"/>
    <property type="match status" value="1"/>
</dbReference>
<comment type="function">
    <text evidence="1">Catalyzes the NADPH-dependent reduction of 7-cyano-7-deazaguanine (preQ0) to 7-aminomethyl-7-deazaguanine (preQ1).</text>
</comment>
<comment type="catalytic activity">
    <reaction evidence="1">
        <text>7-aminomethyl-7-carbaguanine + 2 NADP(+) = 7-cyano-7-deazaguanine + 2 NADPH + 3 H(+)</text>
        <dbReference type="Rhea" id="RHEA:13409"/>
        <dbReference type="ChEBI" id="CHEBI:15378"/>
        <dbReference type="ChEBI" id="CHEBI:45075"/>
        <dbReference type="ChEBI" id="CHEBI:57783"/>
        <dbReference type="ChEBI" id="CHEBI:58349"/>
        <dbReference type="ChEBI" id="CHEBI:58703"/>
        <dbReference type="EC" id="1.7.1.13"/>
    </reaction>
</comment>
<comment type="pathway">
    <text evidence="1">tRNA modification; tRNA-queuosine biosynthesis.</text>
</comment>
<comment type="subunit">
    <text evidence="1">Homodimer.</text>
</comment>
<comment type="subcellular location">
    <subcellularLocation>
        <location evidence="1">Cytoplasm</location>
    </subcellularLocation>
</comment>
<comment type="similarity">
    <text evidence="1">Belongs to the GTP cyclohydrolase I family. QueF type 2 subfamily.</text>
</comment>
<reference key="1">
    <citation type="journal article" date="1995" name="Science">
        <title>Whole-genome random sequencing and assembly of Haemophilus influenzae Rd.</title>
        <authorList>
            <person name="Fleischmann R.D."/>
            <person name="Adams M.D."/>
            <person name="White O."/>
            <person name="Clayton R.A."/>
            <person name="Kirkness E.F."/>
            <person name="Kerlavage A.R."/>
            <person name="Bult C.J."/>
            <person name="Tomb J.-F."/>
            <person name="Dougherty B.A."/>
            <person name="Merrick J.M."/>
            <person name="McKenney K."/>
            <person name="Sutton G.G."/>
            <person name="FitzHugh W."/>
            <person name="Fields C.A."/>
            <person name="Gocayne J.D."/>
            <person name="Scott J.D."/>
            <person name="Shirley R."/>
            <person name="Liu L.-I."/>
            <person name="Glodek A."/>
            <person name="Kelley J.M."/>
            <person name="Weidman J.F."/>
            <person name="Phillips C.A."/>
            <person name="Spriggs T."/>
            <person name="Hedblom E."/>
            <person name="Cotton M.D."/>
            <person name="Utterback T.R."/>
            <person name="Hanna M.C."/>
            <person name="Nguyen D.T."/>
            <person name="Saudek D.M."/>
            <person name="Brandon R.C."/>
            <person name="Fine L.D."/>
            <person name="Fritchman J.L."/>
            <person name="Fuhrmann J.L."/>
            <person name="Geoghagen N.S.M."/>
            <person name="Gnehm C.L."/>
            <person name="McDonald L.A."/>
            <person name="Small K.V."/>
            <person name="Fraser C.M."/>
            <person name="Smith H.O."/>
            <person name="Venter J.C."/>
        </authorList>
    </citation>
    <scope>NUCLEOTIDE SEQUENCE [LARGE SCALE GENOMIC DNA]</scope>
    <source>
        <strain>ATCC 51907 / DSM 11121 / KW20 / Rd</strain>
    </source>
</reference>
<sequence>MNYQDNSLKSLKLGQKTEYASQYDRTLLQPVPRALNRDGLGITQNQPFTIGADIWTAYEISWLNEKGLPQVAIADIYLDYQSQNLIESKSFKLYLNSFNQSKFADFNAVQQTMQRDLSECAQGDVKVRLNPMAVYDSQKIDHLQGDCIDEQDIEITSYEFNANWLKDCVSDEIVEEKLVSHLLKSNCLITNQPDWGTLHIHYVGKKINQEKLLRYVVSFRQHNEFHEQCVERIFCDLMHYAKPEKLTVYARYTRRGGLDINPFRSNFENLPENLRLARQ</sequence>
<feature type="chain" id="PRO_0000163035" description="NADPH-dependent 7-cyano-7-deazaguanine reductase">
    <location>
        <begin position="1"/>
        <end position="279"/>
    </location>
</feature>
<feature type="active site" description="Thioimide intermediate" evidence="1">
    <location>
        <position position="187"/>
    </location>
</feature>
<feature type="active site" description="Proton donor" evidence="1">
    <location>
        <position position="194"/>
    </location>
</feature>
<feature type="binding site" evidence="1">
    <location>
        <begin position="86"/>
        <end position="88"/>
    </location>
    <ligand>
        <name>substrate</name>
    </ligand>
</feature>
<feature type="binding site" evidence="1">
    <location>
        <begin position="88"/>
        <end position="89"/>
    </location>
    <ligand>
        <name>NADPH</name>
        <dbReference type="ChEBI" id="CHEBI:57783"/>
    </ligand>
</feature>
<feature type="binding site" evidence="1">
    <location>
        <begin position="226"/>
        <end position="227"/>
    </location>
    <ligand>
        <name>substrate</name>
    </ligand>
</feature>
<feature type="binding site" evidence="1">
    <location>
        <begin position="255"/>
        <end position="256"/>
    </location>
    <ligand>
        <name>NADPH</name>
        <dbReference type="ChEBI" id="CHEBI:57783"/>
    </ligand>
</feature>
<gene>
    <name evidence="1" type="primary">queF</name>
    <name type="ordered locus">HI_1291</name>
</gene>
<accession>P44153</accession>
<proteinExistence type="inferred from homology"/>